<accession>Q6GPA7</accession>
<dbReference type="EC" id="3.5.1.98" evidence="1"/>
<dbReference type="EC" id="3.5.1.-" evidence="1"/>
<dbReference type="EMBL" id="BC073234">
    <property type="protein sequence ID" value="AAH73234.1"/>
    <property type="molecule type" value="mRNA"/>
</dbReference>
<dbReference type="RefSeq" id="NP_001085711.1">
    <property type="nucleotide sequence ID" value="NM_001092242.1"/>
</dbReference>
<dbReference type="SMR" id="Q6GPA7"/>
<dbReference type="DNASU" id="444137"/>
<dbReference type="GeneID" id="444137"/>
<dbReference type="KEGG" id="xla:444137"/>
<dbReference type="AGR" id="Xenbase:XB-GENE-5863488"/>
<dbReference type="CTD" id="444137"/>
<dbReference type="Xenbase" id="XB-GENE-5863488">
    <property type="gene designation" value="hdac8.L"/>
</dbReference>
<dbReference type="OrthoDB" id="73273at2759"/>
<dbReference type="Proteomes" id="UP000186698">
    <property type="component" value="Chromosome 8L"/>
</dbReference>
<dbReference type="Bgee" id="444137">
    <property type="expression patterns" value="Expressed in egg cell and 19 other cell types or tissues"/>
</dbReference>
<dbReference type="GO" id="GO:0005694">
    <property type="term" value="C:chromosome"/>
    <property type="evidence" value="ECO:0007669"/>
    <property type="project" value="UniProtKB-SubCell"/>
</dbReference>
<dbReference type="GO" id="GO:0005737">
    <property type="term" value="C:cytoplasm"/>
    <property type="evidence" value="ECO:0007669"/>
    <property type="project" value="UniProtKB-SubCell"/>
</dbReference>
<dbReference type="GO" id="GO:0005634">
    <property type="term" value="C:nucleus"/>
    <property type="evidence" value="ECO:0007669"/>
    <property type="project" value="UniProtKB-SubCell"/>
</dbReference>
<dbReference type="GO" id="GO:0004407">
    <property type="term" value="F:histone deacetylase activity"/>
    <property type="evidence" value="ECO:0000250"/>
    <property type="project" value="UniProtKB"/>
</dbReference>
<dbReference type="GO" id="GO:0141221">
    <property type="term" value="F:histone deacetylase activity, hydrolytic mechanism"/>
    <property type="evidence" value="ECO:0007669"/>
    <property type="project" value="UniProtKB-EC"/>
</dbReference>
<dbReference type="GO" id="GO:0160009">
    <property type="term" value="F:histone decrotonylase activity"/>
    <property type="evidence" value="ECO:0000250"/>
    <property type="project" value="UniProtKB"/>
</dbReference>
<dbReference type="GO" id="GO:0046872">
    <property type="term" value="F:metal ion binding"/>
    <property type="evidence" value="ECO:0007669"/>
    <property type="project" value="UniProtKB-KW"/>
</dbReference>
<dbReference type="GO" id="GO:0031507">
    <property type="term" value="P:heterochromatin formation"/>
    <property type="evidence" value="ECO:0000318"/>
    <property type="project" value="GO_Central"/>
</dbReference>
<dbReference type="CDD" id="cd10000">
    <property type="entry name" value="HDAC8"/>
    <property type="match status" value="1"/>
</dbReference>
<dbReference type="FunFam" id="3.40.800.20:FF:000006">
    <property type="entry name" value="Histone deacetylase 8"/>
    <property type="match status" value="1"/>
</dbReference>
<dbReference type="Gene3D" id="3.40.800.20">
    <property type="entry name" value="Histone deacetylase domain"/>
    <property type="match status" value="1"/>
</dbReference>
<dbReference type="InterPro" id="IPR050284">
    <property type="entry name" value="HDAC_PDAC"/>
</dbReference>
<dbReference type="InterPro" id="IPR000286">
    <property type="entry name" value="His_deacetylse"/>
</dbReference>
<dbReference type="InterPro" id="IPR003084">
    <property type="entry name" value="His_deacetylse_1"/>
</dbReference>
<dbReference type="InterPro" id="IPR023801">
    <property type="entry name" value="His_deacetylse_dom"/>
</dbReference>
<dbReference type="InterPro" id="IPR037138">
    <property type="entry name" value="His_deacetylse_dom_sf"/>
</dbReference>
<dbReference type="InterPro" id="IPR023696">
    <property type="entry name" value="Ureohydrolase_dom_sf"/>
</dbReference>
<dbReference type="PANTHER" id="PTHR10625:SF14">
    <property type="entry name" value="HISTONE DEACETYLASE 8"/>
    <property type="match status" value="1"/>
</dbReference>
<dbReference type="PANTHER" id="PTHR10625">
    <property type="entry name" value="HISTONE DEACETYLASE HDAC1-RELATED"/>
    <property type="match status" value="1"/>
</dbReference>
<dbReference type="Pfam" id="PF00850">
    <property type="entry name" value="Hist_deacetyl"/>
    <property type="match status" value="1"/>
</dbReference>
<dbReference type="PIRSF" id="PIRSF037913">
    <property type="entry name" value="His_deacetylse_1"/>
    <property type="match status" value="1"/>
</dbReference>
<dbReference type="PRINTS" id="PR01270">
    <property type="entry name" value="HDASUPER"/>
</dbReference>
<dbReference type="PRINTS" id="PR01271">
    <property type="entry name" value="HISDACETLASE"/>
</dbReference>
<dbReference type="SUPFAM" id="SSF52768">
    <property type="entry name" value="Arginase/deacetylase"/>
    <property type="match status" value="1"/>
</dbReference>
<sequence>MSRVVKPKVASMEEMAAFHTDAYLQHLHKVSEEGDNDDPETLEYGLGYDCPITEGIYDYAAAVGGATLTAAEQLIEGKTRIAVNWPGGWHHAKKDEASGFCYLNDAVLGILKLREKFDRVLYVDMDLHHGDGVEDAFSFTSKVMTVSLHKFSPGFFPGTGDVSDIGLGKGRYYSINVPLQDGIQDDKYYQICEGVLKEVFTTFNPEAVVLQLGADTIAGDPMCSFNMTPEGIGKCLKYVLQWQLPTLILGGGGYHLPNTARCWTYLTALIVGRTLSSEIPDHEFFTEYGPDYVLEITPSCRPDRNDTQKVQEILQSIKGNLKRVV</sequence>
<feature type="chain" id="PRO_0000389510" description="Histone deacetylase 8">
    <location>
        <begin position="1"/>
        <end position="325"/>
    </location>
</feature>
<feature type="region of interest" description="Histone deacetylase">
    <location>
        <begin position="1"/>
        <end position="272"/>
    </location>
</feature>
<feature type="active site" description="Proton acceptor" evidence="1">
    <location>
        <position position="91"/>
    </location>
</feature>
<feature type="binding site" evidence="1">
    <location>
        <position position="49"/>
    </location>
    <ligand>
        <name>substrate</name>
    </ligand>
</feature>
<feature type="binding site" evidence="1">
    <location>
        <position position="99"/>
    </location>
    <ligand>
        <name>substrate</name>
    </ligand>
</feature>
<feature type="binding site" evidence="1">
    <location>
        <position position="126"/>
    </location>
    <ligand>
        <name>a divalent metal cation</name>
        <dbReference type="ChEBI" id="CHEBI:60240"/>
    </ligand>
</feature>
<feature type="binding site" evidence="1">
    <location>
        <position position="128"/>
    </location>
    <ligand>
        <name>a divalent metal cation</name>
        <dbReference type="ChEBI" id="CHEBI:60240"/>
    </ligand>
</feature>
<feature type="binding site" evidence="1">
    <location>
        <position position="215"/>
    </location>
    <ligand>
        <name>a divalent metal cation</name>
        <dbReference type="ChEBI" id="CHEBI:60240"/>
    </ligand>
</feature>
<feature type="binding site" evidence="1">
    <location>
        <position position="254"/>
    </location>
    <ligand>
        <name>substrate</name>
    </ligand>
</feature>
<organism>
    <name type="scientific">Xenopus laevis</name>
    <name type="common">African clawed frog</name>
    <dbReference type="NCBI Taxonomy" id="8355"/>
    <lineage>
        <taxon>Eukaryota</taxon>
        <taxon>Metazoa</taxon>
        <taxon>Chordata</taxon>
        <taxon>Craniata</taxon>
        <taxon>Vertebrata</taxon>
        <taxon>Euteleostomi</taxon>
        <taxon>Amphibia</taxon>
        <taxon>Batrachia</taxon>
        <taxon>Anura</taxon>
        <taxon>Pipoidea</taxon>
        <taxon>Pipidae</taxon>
        <taxon>Xenopodinae</taxon>
        <taxon>Xenopus</taxon>
        <taxon>Xenopus</taxon>
    </lineage>
</organism>
<evidence type="ECO:0000250" key="1">
    <source>
        <dbReference type="UniProtKB" id="Q9BY41"/>
    </source>
</evidence>
<evidence type="ECO:0000305" key="2"/>
<protein>
    <recommendedName>
        <fullName>Histone deacetylase 8</fullName>
        <shortName>HD8</shortName>
        <ecNumber evidence="1">3.5.1.98</ecNumber>
    </recommendedName>
    <alternativeName>
        <fullName evidence="2">Protein deacetylase HDAC8</fullName>
        <ecNumber evidence="1">3.5.1.-</ecNumber>
    </alternativeName>
    <alternativeName>
        <fullName evidence="2">Protein decrotonylase HDAC8</fullName>
        <ecNumber evidence="1">3.5.1.-</ecNumber>
    </alternativeName>
</protein>
<keyword id="KW-0156">Chromatin regulator</keyword>
<keyword id="KW-0158">Chromosome</keyword>
<keyword id="KW-0963">Cytoplasm</keyword>
<keyword id="KW-0378">Hydrolase</keyword>
<keyword id="KW-0479">Metal-binding</keyword>
<keyword id="KW-0539">Nucleus</keyword>
<keyword id="KW-1185">Reference proteome</keyword>
<keyword id="KW-0678">Repressor</keyword>
<keyword id="KW-0804">Transcription</keyword>
<keyword id="KW-0805">Transcription regulation</keyword>
<reference key="1">
    <citation type="submission" date="2004-06" db="EMBL/GenBank/DDBJ databases">
        <authorList>
            <consortium name="NIH - Xenopus Gene Collection (XGC) project"/>
        </authorList>
    </citation>
    <scope>NUCLEOTIDE SEQUENCE [LARGE SCALE MRNA]</scope>
    <source>
        <tissue>Embryo</tissue>
    </source>
</reference>
<comment type="function">
    <text evidence="1">Histone deacetylase that catalyzes the deacetylation of lysine residues on the N-terminal part of the core histones (H2A, H2B, H3 and H4). Histone deacetylation gives a tag for epigenetic repression and plays an important role in transcriptional regulation, cell cycle progression and developmental events. Histone deacetylases act via the formation of large multiprotein complexes. Also involved in the deacetylation of non-histone proteins. In addition to protein deacetylase activity, also has protein-lysine deacylase activity: acts as a protein decrotonylase by mediating decrotonylation ((2E)-butenoyl) of histones.</text>
</comment>
<comment type="catalytic activity">
    <reaction evidence="1">
        <text>N(6)-acetyl-L-lysyl-[histone] + H2O = L-lysyl-[histone] + acetate</text>
        <dbReference type="Rhea" id="RHEA:58196"/>
        <dbReference type="Rhea" id="RHEA-COMP:9845"/>
        <dbReference type="Rhea" id="RHEA-COMP:11338"/>
        <dbReference type="ChEBI" id="CHEBI:15377"/>
        <dbReference type="ChEBI" id="CHEBI:29969"/>
        <dbReference type="ChEBI" id="CHEBI:30089"/>
        <dbReference type="ChEBI" id="CHEBI:61930"/>
        <dbReference type="EC" id="3.5.1.98"/>
    </reaction>
    <physiologicalReaction direction="left-to-right" evidence="1">
        <dbReference type="Rhea" id="RHEA:58197"/>
    </physiologicalReaction>
</comment>
<comment type="catalytic activity">
    <reaction evidence="1">
        <text>N(6)-acetyl-L-lysyl-[protein] + H2O = L-lysyl-[protein] + acetate</text>
        <dbReference type="Rhea" id="RHEA:58108"/>
        <dbReference type="Rhea" id="RHEA-COMP:9752"/>
        <dbReference type="Rhea" id="RHEA-COMP:10731"/>
        <dbReference type="ChEBI" id="CHEBI:15377"/>
        <dbReference type="ChEBI" id="CHEBI:29969"/>
        <dbReference type="ChEBI" id="CHEBI:30089"/>
        <dbReference type="ChEBI" id="CHEBI:61930"/>
    </reaction>
    <physiologicalReaction direction="left-to-right" evidence="1">
        <dbReference type="Rhea" id="RHEA:58109"/>
    </physiologicalReaction>
</comment>
<comment type="catalytic activity">
    <reaction evidence="1">
        <text>N(6)-(2E)-butenoyl-L-lysyl-[protein] + H2O = (2E)-2-butenoate + L-lysyl-[protein]</text>
        <dbReference type="Rhea" id="RHEA:69172"/>
        <dbReference type="Rhea" id="RHEA-COMP:9752"/>
        <dbReference type="Rhea" id="RHEA-COMP:13707"/>
        <dbReference type="ChEBI" id="CHEBI:15377"/>
        <dbReference type="ChEBI" id="CHEBI:29969"/>
        <dbReference type="ChEBI" id="CHEBI:35899"/>
        <dbReference type="ChEBI" id="CHEBI:137954"/>
    </reaction>
    <physiologicalReaction direction="left-to-right" evidence="1">
        <dbReference type="Rhea" id="RHEA:69173"/>
    </physiologicalReaction>
</comment>
<comment type="cofactor">
    <cofactor evidence="1">
        <name>a divalent metal cation</name>
        <dbReference type="ChEBI" id="CHEBI:60240"/>
    </cofactor>
    <text evidence="1">Binds 1 divalent metal cation per subunit.</text>
</comment>
<comment type="activity regulation">
    <text evidence="1">Its activity is inhibited by trichostatin A (TSA) and butyrate, 2 well known histone deacetylase inhibitors.</text>
</comment>
<comment type="subcellular location">
    <subcellularLocation>
        <location evidence="1">Nucleus</location>
    </subcellularLocation>
    <subcellularLocation>
        <location evidence="1">Chromosome</location>
    </subcellularLocation>
    <subcellularLocation>
        <location evidence="1">Cytoplasm</location>
    </subcellularLocation>
    <text evidence="1">Excluded from the nucleoli. Found in the cytoplasm of cells showing smooth muscle differentiation.</text>
</comment>
<comment type="similarity">
    <text evidence="2">Belongs to the histone deacetylase family. HD type 1 subfamily.</text>
</comment>
<gene>
    <name type="primary">hdac8</name>
</gene>
<proteinExistence type="evidence at transcript level"/>
<name>HDAC8_XENLA</name>